<accession>A1VZK1</accession>
<reference key="1">
    <citation type="submission" date="2006-12" db="EMBL/GenBank/DDBJ databases">
        <authorList>
            <person name="Fouts D.E."/>
            <person name="Nelson K.E."/>
            <person name="Sebastian Y."/>
        </authorList>
    </citation>
    <scope>NUCLEOTIDE SEQUENCE [LARGE SCALE GENOMIC DNA]</scope>
    <source>
        <strain>81-176</strain>
    </source>
</reference>
<keyword id="KW-0131">Cell cycle</keyword>
<keyword id="KW-0132">Cell division</keyword>
<keyword id="KW-0133">Cell shape</keyword>
<keyword id="KW-0961">Cell wall biogenesis/degradation</keyword>
<keyword id="KW-0963">Cytoplasm</keyword>
<keyword id="KW-0573">Peptidoglycan synthesis</keyword>
<keyword id="KW-0670">Pyruvate</keyword>
<keyword id="KW-0808">Transferase</keyword>
<proteinExistence type="inferred from homology"/>
<gene>
    <name evidence="1" type="primary">murA</name>
    <name type="ordered locus">CJJ81176_0874</name>
</gene>
<protein>
    <recommendedName>
        <fullName evidence="1">UDP-N-acetylglucosamine 1-carboxyvinyltransferase</fullName>
        <ecNumber evidence="1">2.5.1.7</ecNumber>
    </recommendedName>
    <alternativeName>
        <fullName evidence="1">Enoylpyruvate transferase</fullName>
    </alternativeName>
    <alternativeName>
        <fullName evidence="1">UDP-N-acetylglucosamine enolpyruvyl transferase</fullName>
        <shortName evidence="1">EPT</shortName>
    </alternativeName>
</protein>
<sequence>MTYLEIEGTNHLSGNVTISGAKNAALPLIVSSILAKNEVKINNVPNVADIKTLISLLENLGAKVNFQNNSALLNTNTLNQTIAKYDIVRKMRASILTLGPLLARFGHCEVSLPGGCAIGQRPIDLHLLALEKMGANIQIKQGYVVASGNLKGNEILFDKITVTGSENIIMAAALAKGKTKLLNVAKEPEVVQLCEVLKDAGLEIKGIGTDELEIYGSDGELLEFKEFSVIPDRIEAGTYLCAGAITNSKITLDKVNATHLSAVLAKLHQMGFETLITEDSITLLPAKEIKPVEIMTSEYPGFPTDMQAQFMALALKANGTSIIDERLFENRFMHVSELLRMGADIKLNGHIATIVGGKELNAADVMATDLRASSALILAALAAKGTSKVHRIYHLDRGYENLEEKFKDLGAKITRLEE</sequence>
<comment type="function">
    <text evidence="1">Cell wall formation. Adds enolpyruvyl to UDP-N-acetylglucosamine.</text>
</comment>
<comment type="catalytic activity">
    <reaction evidence="1">
        <text>phosphoenolpyruvate + UDP-N-acetyl-alpha-D-glucosamine = UDP-N-acetyl-3-O-(1-carboxyvinyl)-alpha-D-glucosamine + phosphate</text>
        <dbReference type="Rhea" id="RHEA:18681"/>
        <dbReference type="ChEBI" id="CHEBI:43474"/>
        <dbReference type="ChEBI" id="CHEBI:57705"/>
        <dbReference type="ChEBI" id="CHEBI:58702"/>
        <dbReference type="ChEBI" id="CHEBI:68483"/>
        <dbReference type="EC" id="2.5.1.7"/>
    </reaction>
</comment>
<comment type="pathway">
    <text evidence="1">Cell wall biogenesis; peptidoglycan biosynthesis.</text>
</comment>
<comment type="subcellular location">
    <subcellularLocation>
        <location evidence="1">Cytoplasm</location>
    </subcellularLocation>
</comment>
<comment type="similarity">
    <text evidence="1">Belongs to the EPSP synthase family. MurA subfamily.</text>
</comment>
<feature type="chain" id="PRO_1000023027" description="UDP-N-acetylglucosamine 1-carboxyvinyltransferase">
    <location>
        <begin position="1"/>
        <end position="418"/>
    </location>
</feature>
<feature type="active site" description="Proton donor" evidence="1">
    <location>
        <position position="116"/>
    </location>
</feature>
<feature type="binding site" evidence="1">
    <location>
        <begin position="22"/>
        <end position="23"/>
    </location>
    <ligand>
        <name>phosphoenolpyruvate</name>
        <dbReference type="ChEBI" id="CHEBI:58702"/>
    </ligand>
</feature>
<feature type="binding site" evidence="1">
    <location>
        <position position="92"/>
    </location>
    <ligand>
        <name>UDP-N-acetyl-alpha-D-glucosamine</name>
        <dbReference type="ChEBI" id="CHEBI:57705"/>
    </ligand>
</feature>
<feature type="binding site" evidence="1">
    <location>
        <begin position="121"/>
        <end position="125"/>
    </location>
    <ligand>
        <name>UDP-N-acetyl-alpha-D-glucosamine</name>
        <dbReference type="ChEBI" id="CHEBI:57705"/>
    </ligand>
</feature>
<feature type="binding site" evidence="1">
    <location>
        <position position="305"/>
    </location>
    <ligand>
        <name>UDP-N-acetyl-alpha-D-glucosamine</name>
        <dbReference type="ChEBI" id="CHEBI:57705"/>
    </ligand>
</feature>
<feature type="binding site" evidence="1">
    <location>
        <position position="327"/>
    </location>
    <ligand>
        <name>UDP-N-acetyl-alpha-D-glucosamine</name>
        <dbReference type="ChEBI" id="CHEBI:57705"/>
    </ligand>
</feature>
<feature type="modified residue" description="2-(S-cysteinyl)pyruvic acid O-phosphothioketal" evidence="1">
    <location>
        <position position="116"/>
    </location>
</feature>
<organism>
    <name type="scientific">Campylobacter jejuni subsp. jejuni serotype O:23/36 (strain 81-176)</name>
    <dbReference type="NCBI Taxonomy" id="354242"/>
    <lineage>
        <taxon>Bacteria</taxon>
        <taxon>Pseudomonadati</taxon>
        <taxon>Campylobacterota</taxon>
        <taxon>Epsilonproteobacteria</taxon>
        <taxon>Campylobacterales</taxon>
        <taxon>Campylobacteraceae</taxon>
        <taxon>Campylobacter</taxon>
    </lineage>
</organism>
<dbReference type="EC" id="2.5.1.7" evidence="1"/>
<dbReference type="EMBL" id="CP000538">
    <property type="protein sequence ID" value="EAQ72300.1"/>
    <property type="molecule type" value="Genomic_DNA"/>
</dbReference>
<dbReference type="RefSeq" id="WP_002857102.1">
    <property type="nucleotide sequence ID" value="NC_008787.1"/>
</dbReference>
<dbReference type="SMR" id="A1VZK1"/>
<dbReference type="KEGG" id="cjj:CJJ81176_0874"/>
<dbReference type="eggNOG" id="COG0766">
    <property type="taxonomic scope" value="Bacteria"/>
</dbReference>
<dbReference type="HOGENOM" id="CLU_027387_0_0_7"/>
<dbReference type="UniPathway" id="UPA00219"/>
<dbReference type="Proteomes" id="UP000000646">
    <property type="component" value="Chromosome"/>
</dbReference>
<dbReference type="GO" id="GO:0005737">
    <property type="term" value="C:cytoplasm"/>
    <property type="evidence" value="ECO:0007669"/>
    <property type="project" value="UniProtKB-SubCell"/>
</dbReference>
<dbReference type="GO" id="GO:0008760">
    <property type="term" value="F:UDP-N-acetylglucosamine 1-carboxyvinyltransferase activity"/>
    <property type="evidence" value="ECO:0007669"/>
    <property type="project" value="UniProtKB-UniRule"/>
</dbReference>
<dbReference type="GO" id="GO:0051301">
    <property type="term" value="P:cell division"/>
    <property type="evidence" value="ECO:0007669"/>
    <property type="project" value="UniProtKB-KW"/>
</dbReference>
<dbReference type="GO" id="GO:0071555">
    <property type="term" value="P:cell wall organization"/>
    <property type="evidence" value="ECO:0007669"/>
    <property type="project" value="UniProtKB-KW"/>
</dbReference>
<dbReference type="GO" id="GO:0009252">
    <property type="term" value="P:peptidoglycan biosynthetic process"/>
    <property type="evidence" value="ECO:0007669"/>
    <property type="project" value="UniProtKB-UniRule"/>
</dbReference>
<dbReference type="GO" id="GO:0008360">
    <property type="term" value="P:regulation of cell shape"/>
    <property type="evidence" value="ECO:0007669"/>
    <property type="project" value="UniProtKB-KW"/>
</dbReference>
<dbReference type="GO" id="GO:0019277">
    <property type="term" value="P:UDP-N-acetylgalactosamine biosynthetic process"/>
    <property type="evidence" value="ECO:0007669"/>
    <property type="project" value="InterPro"/>
</dbReference>
<dbReference type="CDD" id="cd01555">
    <property type="entry name" value="UdpNAET"/>
    <property type="match status" value="1"/>
</dbReference>
<dbReference type="FunFam" id="3.65.10.10:FF:000001">
    <property type="entry name" value="UDP-N-acetylglucosamine 1-carboxyvinyltransferase"/>
    <property type="match status" value="1"/>
</dbReference>
<dbReference type="Gene3D" id="3.65.10.10">
    <property type="entry name" value="Enolpyruvate transferase domain"/>
    <property type="match status" value="2"/>
</dbReference>
<dbReference type="HAMAP" id="MF_00111">
    <property type="entry name" value="MurA"/>
    <property type="match status" value="1"/>
</dbReference>
<dbReference type="InterPro" id="IPR001986">
    <property type="entry name" value="Enolpyruvate_Tfrase_dom"/>
</dbReference>
<dbReference type="InterPro" id="IPR036968">
    <property type="entry name" value="Enolpyruvate_Tfrase_sf"/>
</dbReference>
<dbReference type="InterPro" id="IPR050068">
    <property type="entry name" value="MurA_subfamily"/>
</dbReference>
<dbReference type="InterPro" id="IPR013792">
    <property type="entry name" value="RNA3'P_cycl/enolpyr_Trfase_a/b"/>
</dbReference>
<dbReference type="InterPro" id="IPR005750">
    <property type="entry name" value="UDP_GlcNAc_COvinyl_MurA"/>
</dbReference>
<dbReference type="NCBIfam" id="TIGR01072">
    <property type="entry name" value="murA"/>
    <property type="match status" value="1"/>
</dbReference>
<dbReference type="NCBIfam" id="NF006873">
    <property type="entry name" value="PRK09369.1"/>
    <property type="match status" value="1"/>
</dbReference>
<dbReference type="PANTHER" id="PTHR43783">
    <property type="entry name" value="UDP-N-ACETYLGLUCOSAMINE 1-CARBOXYVINYLTRANSFERASE"/>
    <property type="match status" value="1"/>
</dbReference>
<dbReference type="PANTHER" id="PTHR43783:SF1">
    <property type="entry name" value="UDP-N-ACETYLGLUCOSAMINE 1-CARBOXYVINYLTRANSFERASE"/>
    <property type="match status" value="1"/>
</dbReference>
<dbReference type="Pfam" id="PF00275">
    <property type="entry name" value="EPSP_synthase"/>
    <property type="match status" value="1"/>
</dbReference>
<dbReference type="SUPFAM" id="SSF55205">
    <property type="entry name" value="EPT/RTPC-like"/>
    <property type="match status" value="1"/>
</dbReference>
<evidence type="ECO:0000255" key="1">
    <source>
        <dbReference type="HAMAP-Rule" id="MF_00111"/>
    </source>
</evidence>
<name>MURA_CAMJJ</name>